<name>MCFJ_DICDI</name>
<comment type="function">
    <text evidence="1">Mitochondrial solute carriers shuttle metabolites, nucleotides, and cofactors through the mitochondrial inner membrane.</text>
</comment>
<comment type="subcellular location">
    <subcellularLocation>
        <location evidence="1">Mitochondrion inner membrane</location>
        <topology evidence="1">Multi-pass membrane protein</topology>
    </subcellularLocation>
</comment>
<comment type="induction">
    <text evidence="3">Up-regulated by phagocytic stimuli.</text>
</comment>
<comment type="similarity">
    <text evidence="4">Belongs to the mitochondrial carrier (TC 2.A.29) family.</text>
</comment>
<feature type="chain" id="PRO_0000385524" description="Mitochondrial substrate carrier family protein J">
    <location>
        <begin position="1"/>
        <end position="345"/>
    </location>
</feature>
<feature type="topological domain" description="Mitochondrial intermembrane" evidence="1">
    <location>
        <begin position="1"/>
        <end position="31"/>
    </location>
</feature>
<feature type="transmembrane region" description="Helical; Name=1" evidence="2">
    <location>
        <begin position="32"/>
        <end position="52"/>
    </location>
</feature>
<feature type="topological domain" description="Mitochondrial matrix" evidence="1">
    <location>
        <begin position="53"/>
        <end position="88"/>
    </location>
</feature>
<feature type="transmembrane region" description="Helical; Name=2" evidence="2">
    <location>
        <begin position="89"/>
        <end position="110"/>
    </location>
</feature>
<feature type="topological domain" description="Mitochondrial intermembrane" evidence="1">
    <location>
        <begin position="111"/>
        <end position="129"/>
    </location>
</feature>
<feature type="transmembrane region" description="Helical; Name=3" evidence="2">
    <location>
        <begin position="130"/>
        <end position="150"/>
    </location>
</feature>
<feature type="topological domain" description="Mitochondrial matrix" evidence="1">
    <location>
        <begin position="151"/>
        <end position="191"/>
    </location>
</feature>
<feature type="transmembrane region" description="Helical; Name=4" evidence="2">
    <location>
        <begin position="192"/>
        <end position="208"/>
    </location>
</feature>
<feature type="topological domain" description="Mitochondrial intermembrane" evidence="1">
    <location>
        <begin position="209"/>
        <end position="257"/>
    </location>
</feature>
<feature type="transmembrane region" description="Helical; Name=5" evidence="2">
    <location>
        <begin position="258"/>
        <end position="278"/>
    </location>
</feature>
<feature type="topological domain" description="Mitochondrial matrix" evidence="1">
    <location>
        <begin position="279"/>
        <end position="316"/>
    </location>
</feature>
<feature type="transmembrane region" description="Helical; Name=6" evidence="2">
    <location>
        <begin position="317"/>
        <end position="337"/>
    </location>
</feature>
<feature type="topological domain" description="Mitochondrial intermembrane" evidence="1">
    <location>
        <begin position="338"/>
        <end position="345"/>
    </location>
</feature>
<feature type="repeat" description="Solcar 1">
    <location>
        <begin position="30"/>
        <end position="118"/>
    </location>
</feature>
<feature type="repeat" description="Solcar 2">
    <location>
        <begin position="129"/>
        <end position="217"/>
    </location>
</feature>
<feature type="repeat" description="Solcar 3">
    <location>
        <begin position="255"/>
        <end position="342"/>
    </location>
</feature>
<accession>Q54VX4</accession>
<reference key="1">
    <citation type="journal article" date="2005" name="Nature">
        <title>The genome of the social amoeba Dictyostelium discoideum.</title>
        <authorList>
            <person name="Eichinger L."/>
            <person name="Pachebat J.A."/>
            <person name="Gloeckner G."/>
            <person name="Rajandream M.A."/>
            <person name="Sucgang R."/>
            <person name="Berriman M."/>
            <person name="Song J."/>
            <person name="Olsen R."/>
            <person name="Szafranski K."/>
            <person name="Xu Q."/>
            <person name="Tunggal B."/>
            <person name="Kummerfeld S."/>
            <person name="Madera M."/>
            <person name="Konfortov B.A."/>
            <person name="Rivero F."/>
            <person name="Bankier A.T."/>
            <person name="Lehmann R."/>
            <person name="Hamlin N."/>
            <person name="Davies R."/>
            <person name="Gaudet P."/>
            <person name="Fey P."/>
            <person name="Pilcher K."/>
            <person name="Chen G."/>
            <person name="Saunders D."/>
            <person name="Sodergren E.J."/>
            <person name="Davis P."/>
            <person name="Kerhornou A."/>
            <person name="Nie X."/>
            <person name="Hall N."/>
            <person name="Anjard C."/>
            <person name="Hemphill L."/>
            <person name="Bason N."/>
            <person name="Farbrother P."/>
            <person name="Desany B."/>
            <person name="Just E."/>
            <person name="Morio T."/>
            <person name="Rost R."/>
            <person name="Churcher C.M."/>
            <person name="Cooper J."/>
            <person name="Haydock S."/>
            <person name="van Driessche N."/>
            <person name="Cronin A."/>
            <person name="Goodhead I."/>
            <person name="Muzny D.M."/>
            <person name="Mourier T."/>
            <person name="Pain A."/>
            <person name="Lu M."/>
            <person name="Harper D."/>
            <person name="Lindsay R."/>
            <person name="Hauser H."/>
            <person name="James K.D."/>
            <person name="Quiles M."/>
            <person name="Madan Babu M."/>
            <person name="Saito T."/>
            <person name="Buchrieser C."/>
            <person name="Wardroper A."/>
            <person name="Felder M."/>
            <person name="Thangavelu M."/>
            <person name="Johnson D."/>
            <person name="Knights A."/>
            <person name="Loulseged H."/>
            <person name="Mungall K.L."/>
            <person name="Oliver K."/>
            <person name="Price C."/>
            <person name="Quail M.A."/>
            <person name="Urushihara H."/>
            <person name="Hernandez J."/>
            <person name="Rabbinowitsch E."/>
            <person name="Steffen D."/>
            <person name="Sanders M."/>
            <person name="Ma J."/>
            <person name="Kohara Y."/>
            <person name="Sharp S."/>
            <person name="Simmonds M.N."/>
            <person name="Spiegler S."/>
            <person name="Tivey A."/>
            <person name="Sugano S."/>
            <person name="White B."/>
            <person name="Walker D."/>
            <person name="Woodward J.R."/>
            <person name="Winckler T."/>
            <person name="Tanaka Y."/>
            <person name="Shaulsky G."/>
            <person name="Schleicher M."/>
            <person name="Weinstock G.M."/>
            <person name="Rosenthal A."/>
            <person name="Cox E.C."/>
            <person name="Chisholm R.L."/>
            <person name="Gibbs R.A."/>
            <person name="Loomis W.F."/>
            <person name="Platzer M."/>
            <person name="Kay R.R."/>
            <person name="Williams J.G."/>
            <person name="Dear P.H."/>
            <person name="Noegel A.A."/>
            <person name="Barrell B.G."/>
            <person name="Kuspa A."/>
        </authorList>
    </citation>
    <scope>NUCLEOTIDE SEQUENCE [LARGE SCALE GENOMIC DNA]</scope>
    <source>
        <strain>AX4</strain>
    </source>
</reference>
<reference key="2">
    <citation type="journal article" date="2007" name="Biochimie">
        <title>Mitochondrial carrier family: repertoire and peculiarities of the cellular slime mould Dictyostelium discoideum.</title>
        <authorList>
            <person name="Satre M."/>
            <person name="Mattei S."/>
            <person name="Aubry L."/>
            <person name="Gaudet P."/>
            <person name="Pelosi L."/>
            <person name="Brandolin G."/>
            <person name="Klein G."/>
        </authorList>
    </citation>
    <scope>REVIEW</scope>
</reference>
<reference key="3">
    <citation type="journal article" date="2008" name="BMC Genomics">
        <title>Genome-wide transcriptional changes induced by phagocytosis or growth on bacteria in Dictyostelium.</title>
        <authorList>
            <person name="Sillo A."/>
            <person name="Bloomfield G."/>
            <person name="Balest A."/>
            <person name="Balbo A."/>
            <person name="Pergolizzi B."/>
            <person name="Peracino B."/>
            <person name="Skelton J."/>
            <person name="Ivens A."/>
            <person name="Bozzaro S."/>
        </authorList>
    </citation>
    <scope>INDUCTION [LARGE SCALE ANALYSIS]</scope>
</reference>
<protein>
    <recommendedName>
        <fullName>Mitochondrial substrate carrier family protein J</fullName>
    </recommendedName>
</protein>
<proteinExistence type="evidence at transcript level"/>
<evidence type="ECO:0000250" key="1"/>
<evidence type="ECO:0000255" key="2"/>
<evidence type="ECO:0000269" key="3">
    <source>
    </source>
</evidence>
<evidence type="ECO:0000305" key="4"/>
<gene>
    <name type="primary">mcfJ</name>
    <name type="ORF">DDB_G0280083</name>
</gene>
<dbReference type="EMBL" id="AAFI02000035">
    <property type="protein sequence ID" value="EAL67268.1"/>
    <property type="molecule type" value="Genomic_DNA"/>
</dbReference>
<dbReference type="RefSeq" id="XP_641231.1">
    <property type="nucleotide sequence ID" value="XM_636139.1"/>
</dbReference>
<dbReference type="SMR" id="Q54VX4"/>
<dbReference type="FunCoup" id="Q54VX4">
    <property type="interactions" value="9"/>
</dbReference>
<dbReference type="PaxDb" id="44689-DDB0237610"/>
<dbReference type="EnsemblProtists" id="EAL67268">
    <property type="protein sequence ID" value="EAL67268"/>
    <property type="gene ID" value="DDB_G0280083"/>
</dbReference>
<dbReference type="GeneID" id="8622362"/>
<dbReference type="KEGG" id="ddi:DDB_G0280083"/>
<dbReference type="dictyBase" id="DDB_G0280083">
    <property type="gene designation" value="mcfJ"/>
</dbReference>
<dbReference type="VEuPathDB" id="AmoebaDB:DDB_G0280083"/>
<dbReference type="eggNOG" id="KOG0765">
    <property type="taxonomic scope" value="Eukaryota"/>
</dbReference>
<dbReference type="HOGENOM" id="CLU_015166_3_3_1"/>
<dbReference type="InParanoid" id="Q54VX4"/>
<dbReference type="OMA" id="VSCVYYV"/>
<dbReference type="PhylomeDB" id="Q54VX4"/>
<dbReference type="PRO" id="PR:Q54VX4"/>
<dbReference type="Proteomes" id="UP000002195">
    <property type="component" value="Chromosome 3"/>
</dbReference>
<dbReference type="GO" id="GO:0005743">
    <property type="term" value="C:mitochondrial inner membrane"/>
    <property type="evidence" value="ECO:0007669"/>
    <property type="project" value="UniProtKB-SubCell"/>
</dbReference>
<dbReference type="GO" id="GO:0055085">
    <property type="term" value="P:transmembrane transport"/>
    <property type="evidence" value="ECO:0007669"/>
    <property type="project" value="InterPro"/>
</dbReference>
<dbReference type="Gene3D" id="1.50.40.10">
    <property type="entry name" value="Mitochondrial carrier domain"/>
    <property type="match status" value="1"/>
</dbReference>
<dbReference type="InterPro" id="IPR002067">
    <property type="entry name" value="Mit_carrier"/>
</dbReference>
<dbReference type="InterPro" id="IPR018108">
    <property type="entry name" value="Mitochondrial_sb/sol_carrier"/>
</dbReference>
<dbReference type="InterPro" id="IPR023395">
    <property type="entry name" value="Mt_carrier_dom_sf"/>
</dbReference>
<dbReference type="PANTHER" id="PTHR46080">
    <property type="entry name" value="MITOCHONDRIAL SUBSTRATE CARRIER FAMILY PROTEIN J"/>
    <property type="match status" value="1"/>
</dbReference>
<dbReference type="PANTHER" id="PTHR46080:SF18">
    <property type="entry name" value="MITOCHONDRIAL SUBSTRATE CARRIER FAMILY PROTEIN J"/>
    <property type="match status" value="1"/>
</dbReference>
<dbReference type="Pfam" id="PF00153">
    <property type="entry name" value="Mito_carr"/>
    <property type="match status" value="3"/>
</dbReference>
<dbReference type="PRINTS" id="PR00926">
    <property type="entry name" value="MITOCARRIER"/>
</dbReference>
<dbReference type="SUPFAM" id="SSF103506">
    <property type="entry name" value="Mitochondrial carrier"/>
    <property type="match status" value="1"/>
</dbReference>
<dbReference type="PROSITE" id="PS50920">
    <property type="entry name" value="SOLCAR"/>
    <property type="match status" value="3"/>
</dbReference>
<keyword id="KW-0472">Membrane</keyword>
<keyword id="KW-0496">Mitochondrion</keyword>
<keyword id="KW-0999">Mitochondrion inner membrane</keyword>
<keyword id="KW-1185">Reference proteome</keyword>
<keyword id="KW-0677">Repeat</keyword>
<keyword id="KW-0812">Transmembrane</keyword>
<keyword id="KW-1133">Transmembrane helix</keyword>
<keyword id="KW-0813">Transport</keyword>
<organism>
    <name type="scientific">Dictyostelium discoideum</name>
    <name type="common">Social amoeba</name>
    <dbReference type="NCBI Taxonomy" id="44689"/>
    <lineage>
        <taxon>Eukaryota</taxon>
        <taxon>Amoebozoa</taxon>
        <taxon>Evosea</taxon>
        <taxon>Eumycetozoa</taxon>
        <taxon>Dictyostelia</taxon>
        <taxon>Dictyosteliales</taxon>
        <taxon>Dictyosteliaceae</taxon>
        <taxon>Dictyostelium</taxon>
    </lineage>
</organism>
<sequence length="345" mass="39012">MSSSHTIQETKEVHTKTNKRIQWDDLDPKRYYFYNFLLGGSIDLLMFPLDVIRTRLQVQGSQNVIQSFPQYNGTFDGFKKLIRLEGKRALYKGFLTSECGYLCSRAIYFGSYEFVKQGFLKGRSDSDSDLLFVTTISGAISEALASVIWVPFDVATQSVQIQGSLSKPKYKGGSDVFKKIYGERGIKGLYKGFGATIIRNVPYSGIWWGTYEISKSKLTQFNIRQKLGLKERSSHSLAVSAEIDKNNPSHEVENEDPIIHFISGFFAAVFATSITNPLDVAKTRLQTGVFPENEKPNFYTIIKSTIRKEGIRALWKGLVPSLLTSTPYSMISIFLYEEVKKLSLK</sequence>